<comment type="function">
    <text evidence="1">Interacts with high affinity with vasopressin V1b receptor (AVPR1B) (Ki=8.3 nM), although the displacement of specific [3H]vasopressin binding is incomplete (a 30-40% resistant component remained). Has weaker affinity binding for oxytocin receptor (OXTR) (Ki=175 nM), and V1a receptor (AVPR1A) (Ki=827 nM).</text>
</comment>
<comment type="subcellular location">
    <subcellularLocation>
        <location evidence="2">Secreted</location>
    </subcellularLocation>
</comment>
<comment type="tissue specificity">
    <text evidence="6">Expressed by the venom duct.</text>
</comment>
<comment type="domain">
    <text evidence="5">The cysteine framework is C-C.</text>
</comment>
<comment type="miscellaneous">
    <text evidence="1">Negative results: does not interact with V2R (up to 10 uM).</text>
</comment>
<comment type="similarity">
    <text evidence="5">Belongs to the vasopressin/oxytocin family.</text>
</comment>
<evidence type="ECO:0000269" key="1">
    <source>
    </source>
</evidence>
<evidence type="ECO:0000269" key="2">
    <source>
    </source>
</evidence>
<evidence type="ECO:0000303" key="3">
    <source>
    </source>
</evidence>
<evidence type="ECO:0000303" key="4">
    <source>
    </source>
</evidence>
<evidence type="ECO:0000305" key="5"/>
<evidence type="ECO:0000305" key="6">
    <source>
    </source>
</evidence>
<organism>
    <name type="scientific">Conus striatus</name>
    <name type="common">Striated cone</name>
    <dbReference type="NCBI Taxonomy" id="6493"/>
    <lineage>
        <taxon>Eukaryota</taxon>
        <taxon>Metazoa</taxon>
        <taxon>Spiralia</taxon>
        <taxon>Lophotrochozoa</taxon>
        <taxon>Mollusca</taxon>
        <taxon>Gastropoda</taxon>
        <taxon>Caenogastropoda</taxon>
        <taxon>Neogastropoda</taxon>
        <taxon>Conoidea</taxon>
        <taxon>Conidae</taxon>
        <taxon>Conus</taxon>
        <taxon>Pionoconus</taxon>
    </lineage>
</organism>
<accession>P05487</accession>
<name>CONO_CONST</name>
<proteinExistence type="evidence at protein level"/>
<reference key="1">
    <citation type="journal article" date="1987" name="J. Biol. Chem.">
        <title>Invertebrate vasopressin/oxytocin homologs. Characterization of peptides from Conus geographus and Conus striatus venoms.</title>
        <authorList>
            <person name="Cruz L.J."/>
            <person name="de Santos V."/>
            <person name="Zafaralla G.C."/>
            <person name="Ramilo C.A."/>
            <person name="Zeikus R.D."/>
            <person name="Gray W.R."/>
            <person name="Olivera B.M."/>
        </authorList>
    </citation>
    <scope>PROTEIN SEQUENCE</scope>
    <scope>AMIDATION AT GLY-9</scope>
    <scope>DISULFIDE BOND</scope>
    <scope>SUBCELLULAR LOCATION</scope>
    <source>
        <tissue>Venom</tissue>
    </source>
</reference>
<reference key="2">
    <citation type="journal article" date="2008" name="J. Biol. Chem.">
        <title>Conopressin-T from Conus tulipa reveals an antagonist switch in vasopressin-like peptides.</title>
        <authorList>
            <person name="Dutertre S."/>
            <person name="Croker D."/>
            <person name="Daly N.L."/>
            <person name="Andersson A."/>
            <person name="Muttenthaler M."/>
            <person name="Lumsden N.G."/>
            <person name="Craik D.J."/>
            <person name="Alewood P.F."/>
            <person name="Guillon G."/>
            <person name="Lewis R.J."/>
        </authorList>
    </citation>
    <scope>FUNCTION</scope>
</reference>
<feature type="peptide" id="PRO_0000044099" description="Conopressin-S" evidence="2">
    <location>
        <begin position="1"/>
        <end position="9"/>
    </location>
</feature>
<feature type="modified residue" description="Glycine amide" evidence="2">
    <location>
        <position position="9"/>
    </location>
</feature>
<feature type="disulfide bond" evidence="2">
    <location>
        <begin position="1"/>
        <end position="6"/>
    </location>
</feature>
<protein>
    <recommendedName>
        <fullName evidence="3">Conopressin-S</fullName>
        <shortName evidence="3">Con-S</shortName>
    </recommendedName>
    <alternativeName>
        <fullName evidence="4">Arg-conopressin S</fullName>
    </alternativeName>
</protein>
<sequence length="9" mass="1031">CIIRNCPRG</sequence>
<dbReference type="PIR" id="B28495">
    <property type="entry name" value="B28495"/>
</dbReference>
<dbReference type="ConoServer" id="1267">
    <property type="toxin name" value="conopressin-S"/>
</dbReference>
<dbReference type="GO" id="GO:0005576">
    <property type="term" value="C:extracellular region"/>
    <property type="evidence" value="ECO:0007669"/>
    <property type="project" value="UniProtKB-SubCell"/>
</dbReference>
<dbReference type="GO" id="GO:0005185">
    <property type="term" value="F:neurohypophyseal hormone activity"/>
    <property type="evidence" value="ECO:0007669"/>
    <property type="project" value="InterPro"/>
</dbReference>
<dbReference type="GO" id="GO:0090729">
    <property type="term" value="F:toxin activity"/>
    <property type="evidence" value="ECO:0007669"/>
    <property type="project" value="UniProtKB-KW"/>
</dbReference>
<dbReference type="InterPro" id="IPR022423">
    <property type="entry name" value="Neurohypophysial_hormone_CS"/>
</dbReference>
<dbReference type="PROSITE" id="PS00264">
    <property type="entry name" value="NEUROHYPOPHYS_HORM"/>
    <property type="match status" value="1"/>
</dbReference>
<keyword id="KW-0027">Amidation</keyword>
<keyword id="KW-0903">Direct protein sequencing</keyword>
<keyword id="KW-1015">Disulfide bond</keyword>
<keyword id="KW-1213">G-protein coupled receptor impairing toxin</keyword>
<keyword id="KW-0964">Secreted</keyword>
<keyword id="KW-0800">Toxin</keyword>